<accession>P42951</accession>
<accession>D6VW84</accession>
<name>LSB6_YEAST</name>
<gene>
    <name type="primary">LSB6</name>
    <name type="ordered locus">YJL100W</name>
    <name type="ORF">J0834</name>
</gene>
<comment type="function">
    <text evidence="4">May play a role in endocytic and/or exocytic pathways.</text>
</comment>
<comment type="catalytic activity">
    <reaction evidence="3 4">
        <text>a 1,2-diacyl-sn-glycero-3-phospho-(1D-myo-inositol) + ATP = a 1,2-diacyl-sn-glycero-3-phospho-(1D-myo-inositol 4-phosphate) + ADP + H(+)</text>
        <dbReference type="Rhea" id="RHEA:19877"/>
        <dbReference type="ChEBI" id="CHEBI:15378"/>
        <dbReference type="ChEBI" id="CHEBI:30616"/>
        <dbReference type="ChEBI" id="CHEBI:57880"/>
        <dbReference type="ChEBI" id="CHEBI:58178"/>
        <dbReference type="ChEBI" id="CHEBI:456216"/>
        <dbReference type="EC" id="2.7.1.67"/>
    </reaction>
</comment>
<comment type="cofactor">
    <cofactor evidence="3">
        <name>Mg(2+)</name>
        <dbReference type="ChEBI" id="CHEBI:18420"/>
    </cofactor>
    <cofactor evidence="3">
        <name>Mn(2+)</name>
        <dbReference type="ChEBI" id="CHEBI:29035"/>
    </cofactor>
</comment>
<comment type="subunit">
    <text evidence="4">Interacts with LAS17.</text>
</comment>
<comment type="subcellular location">
    <subcellularLocation>
        <location evidence="3">Cell membrane</location>
        <topology evidence="3">Peripheral membrane protein</topology>
    </subcellularLocation>
    <subcellularLocation>
        <location evidence="3 4">Vacuole membrane</location>
        <topology evidence="3 4">Peripheral membrane protein</topology>
    </subcellularLocation>
    <text evidence="3 4">Located at both the plasma and vacuolar membrane.</text>
</comment>
<comment type="miscellaneous">
    <text evidence="5">Present with 56 molecules/cell in log phase SD medium.</text>
</comment>
<comment type="similarity">
    <text evidence="6">Belongs to the PI3/PI4-kinase family.</text>
</comment>
<sequence length="607" mass="70217">MSNEAYQHDHTVNPHQKIVVNSYDWLQFRDEQDHCKSKNPITHASPGVGSNAQNSDIAEAPQVFHPSYQSLVNVPSESPRPDQTSGSNPAVGLLHNAEDKASGQEEEGSQYEIQYSVFRPLHAYPTKGLAYEQLRRKEEQEQRENFNHLVSDCIEAVETFGRELERIQTGSSGSYFVYGTRADESVPVGVFKPKDEEPYGPFSPKWTKWAHRTFFPCLFGRSCLIPNLGYICESAASLLDRRLETHLVPYTDTASIESFNFYDNRKKWVLGYNLQKKKQKKLGSFQLFLKEYINADEFFHKYPLPGMYSDVKHSFHRKSSGEDINHKPETTRNLTDETEPSKQINSSPISTESEENSKFEWTESSLSQFRLELEKLIILDYIMRNTDRGLDNWMVKLIKLSNNKWRLKLAAIDNGLSFPWKHPDEWRLYPYGWLYLPLQLLAKPFSEQMRSHFLPILTSTNWWEESYQEFLALFSRDQDFNVRMWKKQWAVLKGQAFNVVETLKDPRQGPLELVRRTRCQVIDEKMQVPCCPPPVSIFKNAIDEPIGSYSTSPMVLPSTPSTIPFHAHNQSNSNPVYYDSTLHPFANKTVIAERLQIVNSTPVFTWC</sequence>
<proteinExistence type="evidence at protein level"/>
<keyword id="KW-0067">ATP-binding</keyword>
<keyword id="KW-1003">Cell membrane</keyword>
<keyword id="KW-0418">Kinase</keyword>
<keyword id="KW-0460">Magnesium</keyword>
<keyword id="KW-0464">Manganese</keyword>
<keyword id="KW-0472">Membrane</keyword>
<keyword id="KW-0479">Metal-binding</keyword>
<keyword id="KW-0547">Nucleotide-binding</keyword>
<keyword id="KW-1185">Reference proteome</keyword>
<keyword id="KW-0808">Transferase</keyword>
<keyword id="KW-0926">Vacuole</keyword>
<dbReference type="EC" id="2.7.1.67"/>
<dbReference type="EMBL" id="X85021">
    <property type="protein sequence ID" value="CAA59394.1"/>
    <property type="molecule type" value="Genomic_DNA"/>
</dbReference>
<dbReference type="EMBL" id="Z49375">
    <property type="protein sequence ID" value="CAA89395.1"/>
    <property type="molecule type" value="Genomic_DNA"/>
</dbReference>
<dbReference type="EMBL" id="BK006943">
    <property type="protein sequence ID" value="DAA08700.1"/>
    <property type="molecule type" value="Genomic_DNA"/>
</dbReference>
<dbReference type="PIR" id="S53387">
    <property type="entry name" value="S53387"/>
</dbReference>
<dbReference type="RefSeq" id="NP_012435.1">
    <property type="nucleotide sequence ID" value="NM_001181533.1"/>
</dbReference>
<dbReference type="SMR" id="P42951"/>
<dbReference type="BioGRID" id="33657">
    <property type="interactions" value="22"/>
</dbReference>
<dbReference type="DIP" id="DIP-4035N"/>
<dbReference type="FunCoup" id="P42951">
    <property type="interactions" value="319"/>
</dbReference>
<dbReference type="IntAct" id="P42951">
    <property type="interactions" value="1"/>
</dbReference>
<dbReference type="MINT" id="P42951"/>
<dbReference type="STRING" id="4932.YJL100W"/>
<dbReference type="iPTMnet" id="P42951"/>
<dbReference type="SwissPalm" id="P42951"/>
<dbReference type="PaxDb" id="4932-YJL100W"/>
<dbReference type="PeptideAtlas" id="P42951"/>
<dbReference type="EnsemblFungi" id="YJL100W_mRNA">
    <property type="protein sequence ID" value="YJL100W"/>
    <property type="gene ID" value="YJL100W"/>
</dbReference>
<dbReference type="GeneID" id="853345"/>
<dbReference type="KEGG" id="sce:YJL100W"/>
<dbReference type="AGR" id="SGD:S000003636"/>
<dbReference type="SGD" id="S000003636">
    <property type="gene designation" value="LSB6"/>
</dbReference>
<dbReference type="VEuPathDB" id="FungiDB:YJL100W"/>
<dbReference type="eggNOG" id="KOG2381">
    <property type="taxonomic scope" value="Eukaryota"/>
</dbReference>
<dbReference type="GeneTree" id="ENSGT00390000010434"/>
<dbReference type="HOGENOM" id="CLU_009049_1_0_1"/>
<dbReference type="InParanoid" id="P42951"/>
<dbReference type="OMA" id="TNWWEES"/>
<dbReference type="OrthoDB" id="3349449at2759"/>
<dbReference type="BioCyc" id="YEAST:MONOMER3O-352"/>
<dbReference type="Reactome" id="R-SCE-1483248">
    <property type="pathway name" value="Synthesis of PIPs at the ER membrane"/>
</dbReference>
<dbReference type="Reactome" id="R-SCE-1660499">
    <property type="pathway name" value="Synthesis of PIPs at the plasma membrane"/>
</dbReference>
<dbReference type="Reactome" id="R-SCE-1660514">
    <property type="pathway name" value="Synthesis of PIPs at the Golgi membrane"/>
</dbReference>
<dbReference type="Reactome" id="R-SCE-1660516">
    <property type="pathway name" value="Synthesis of PIPs at the early endosome membrane"/>
</dbReference>
<dbReference type="BioGRID-ORCS" id="853345">
    <property type="hits" value="3 hits in 10 CRISPR screens"/>
</dbReference>
<dbReference type="PRO" id="PR:P42951"/>
<dbReference type="Proteomes" id="UP000002311">
    <property type="component" value="Chromosome X"/>
</dbReference>
<dbReference type="RNAct" id="P42951">
    <property type="molecule type" value="protein"/>
</dbReference>
<dbReference type="GO" id="GO:0005737">
    <property type="term" value="C:cytoplasm"/>
    <property type="evidence" value="ECO:0007005"/>
    <property type="project" value="SGD"/>
</dbReference>
<dbReference type="GO" id="GO:0005768">
    <property type="term" value="C:endosome"/>
    <property type="evidence" value="ECO:0000318"/>
    <property type="project" value="GO_Central"/>
</dbReference>
<dbReference type="GO" id="GO:0000329">
    <property type="term" value="C:fungal-type vacuole membrane"/>
    <property type="evidence" value="ECO:0000314"/>
    <property type="project" value="SGD"/>
</dbReference>
<dbReference type="GO" id="GO:0005886">
    <property type="term" value="C:plasma membrane"/>
    <property type="evidence" value="ECO:0000314"/>
    <property type="project" value="SGD"/>
</dbReference>
<dbReference type="GO" id="GO:0005802">
    <property type="term" value="C:trans-Golgi network"/>
    <property type="evidence" value="ECO:0000318"/>
    <property type="project" value="GO_Central"/>
</dbReference>
<dbReference type="GO" id="GO:0004430">
    <property type="term" value="F:1-phosphatidylinositol 4-kinase activity"/>
    <property type="evidence" value="ECO:0000314"/>
    <property type="project" value="SGD"/>
</dbReference>
<dbReference type="GO" id="GO:0005524">
    <property type="term" value="F:ATP binding"/>
    <property type="evidence" value="ECO:0007669"/>
    <property type="project" value="UniProtKB-KW"/>
</dbReference>
<dbReference type="GO" id="GO:0046872">
    <property type="term" value="F:metal ion binding"/>
    <property type="evidence" value="ECO:0007669"/>
    <property type="project" value="UniProtKB-KW"/>
</dbReference>
<dbReference type="GO" id="GO:0007032">
    <property type="term" value="P:endosome organization"/>
    <property type="evidence" value="ECO:0000318"/>
    <property type="project" value="GO_Central"/>
</dbReference>
<dbReference type="GO" id="GO:0007030">
    <property type="term" value="P:Golgi organization"/>
    <property type="evidence" value="ECO:0000318"/>
    <property type="project" value="GO_Central"/>
</dbReference>
<dbReference type="GO" id="GO:0046854">
    <property type="term" value="P:phosphatidylinositol phosphate biosynthetic process"/>
    <property type="evidence" value="ECO:0000314"/>
    <property type="project" value="SGD"/>
</dbReference>
<dbReference type="Gene3D" id="1.10.1070.20">
    <property type="match status" value="1"/>
</dbReference>
<dbReference type="InterPro" id="IPR039756">
    <property type="entry name" value="Lsb6/PI4K2"/>
</dbReference>
<dbReference type="InterPro" id="IPR000403">
    <property type="entry name" value="PI3/4_kinase_cat_dom"/>
</dbReference>
<dbReference type="InterPro" id="IPR018936">
    <property type="entry name" value="PI3/4_kinase_CS"/>
</dbReference>
<dbReference type="PANTHER" id="PTHR12865:SF1">
    <property type="entry name" value="PHOSPHATIDYLINOSITOL 4-KINASE TYPE 2"/>
    <property type="match status" value="1"/>
</dbReference>
<dbReference type="PANTHER" id="PTHR12865">
    <property type="entry name" value="PHOSPHATIDYLINOSITOL 4-KINASE TYPE-II"/>
    <property type="match status" value="1"/>
</dbReference>
<dbReference type="Pfam" id="PF00454">
    <property type="entry name" value="PI3_PI4_kinase"/>
    <property type="match status" value="1"/>
</dbReference>
<dbReference type="PROSITE" id="PS00916">
    <property type="entry name" value="PI3_4_KINASE_2"/>
    <property type="match status" value="1"/>
</dbReference>
<dbReference type="PROSITE" id="PS50290">
    <property type="entry name" value="PI3_4_KINASE_3"/>
    <property type="match status" value="1"/>
</dbReference>
<reference key="1">
    <citation type="journal article" date="1995" name="Yeast">
        <title>A 37.5 kb region of yeast chromosome X includes the SME1, MEF2, GSH1 and CSD3 genes, a TCP-1-related gene, an open reading frame similar to the DAL80 gene, and a tRNA(Arg).</title>
        <authorList>
            <person name="Rasmussen S.W."/>
        </authorList>
    </citation>
    <scope>NUCLEOTIDE SEQUENCE [GENOMIC DNA]</scope>
    <source>
        <strain>ATCC 96604 / S288c / FY1679</strain>
    </source>
</reference>
<reference key="2">
    <citation type="journal article" date="1996" name="EMBO J.">
        <title>Complete nucleotide sequence of Saccharomyces cerevisiae chromosome X.</title>
        <authorList>
            <person name="Galibert F."/>
            <person name="Alexandraki D."/>
            <person name="Baur A."/>
            <person name="Boles E."/>
            <person name="Chalwatzis N."/>
            <person name="Chuat J.-C."/>
            <person name="Coster F."/>
            <person name="Cziepluch C."/>
            <person name="de Haan M."/>
            <person name="Domdey H."/>
            <person name="Durand P."/>
            <person name="Entian K.-D."/>
            <person name="Gatius M."/>
            <person name="Goffeau A."/>
            <person name="Grivell L.A."/>
            <person name="Hennemann A."/>
            <person name="Herbert C.J."/>
            <person name="Heumann K."/>
            <person name="Hilger F."/>
            <person name="Hollenberg C.P."/>
            <person name="Huang M.-E."/>
            <person name="Jacq C."/>
            <person name="Jauniaux J.-C."/>
            <person name="Katsoulou C."/>
            <person name="Kirchrath L."/>
            <person name="Kleine K."/>
            <person name="Kordes E."/>
            <person name="Koetter P."/>
            <person name="Liebl S."/>
            <person name="Louis E.J."/>
            <person name="Manus V."/>
            <person name="Mewes H.-W."/>
            <person name="Miosga T."/>
            <person name="Obermaier B."/>
            <person name="Perea J."/>
            <person name="Pohl T.M."/>
            <person name="Portetelle D."/>
            <person name="Pujol A."/>
            <person name="Purnelle B."/>
            <person name="Ramezani Rad M."/>
            <person name="Rasmussen S.W."/>
            <person name="Rose M."/>
            <person name="Rossau R."/>
            <person name="Schaaff-Gerstenschlaeger I."/>
            <person name="Smits P.H.M."/>
            <person name="Scarcez T."/>
            <person name="Soriano N."/>
            <person name="To Van D."/>
            <person name="Tzermia M."/>
            <person name="Van Broekhoven A."/>
            <person name="Vandenbol M."/>
            <person name="Wedler H."/>
            <person name="von Wettstein D."/>
            <person name="Wambutt R."/>
            <person name="Zagulski M."/>
            <person name="Zollner A."/>
            <person name="Karpfinger-Hartl L."/>
        </authorList>
    </citation>
    <scope>NUCLEOTIDE SEQUENCE [LARGE SCALE GENOMIC DNA]</scope>
    <source>
        <strain>ATCC 204508 / S288c</strain>
    </source>
</reference>
<reference key="3">
    <citation type="journal article" date="2014" name="G3 (Bethesda)">
        <title>The reference genome sequence of Saccharomyces cerevisiae: Then and now.</title>
        <authorList>
            <person name="Engel S.R."/>
            <person name="Dietrich F.S."/>
            <person name="Fisk D.G."/>
            <person name="Binkley G."/>
            <person name="Balakrishnan R."/>
            <person name="Costanzo M.C."/>
            <person name="Dwight S.S."/>
            <person name="Hitz B.C."/>
            <person name="Karra K."/>
            <person name="Nash R.S."/>
            <person name="Weng S."/>
            <person name="Wong E.D."/>
            <person name="Lloyd P."/>
            <person name="Skrzypek M.S."/>
            <person name="Miyasato S.R."/>
            <person name="Simison M."/>
            <person name="Cherry J.M."/>
        </authorList>
    </citation>
    <scope>GENOME REANNOTATION</scope>
    <source>
        <strain>ATCC 204508 / S288c</strain>
    </source>
</reference>
<reference key="4">
    <citation type="journal article" date="2002" name="J. Biol. Chem.">
        <title>The Saccharomyces cerevisiae LSB6 gene encodes phosphatidylinositol 4-kinase activity.</title>
        <authorList>
            <person name="Han G.-S."/>
            <person name="Audhya A."/>
            <person name="Markley D.J."/>
            <person name="Emr S.D."/>
            <person name="Carman G.M."/>
        </authorList>
    </citation>
    <scope>CATALYTIC ACTIVITY</scope>
    <scope>COFACTOR</scope>
    <scope>SUBCELLULAR LOCATION</scope>
</reference>
<reference key="5">
    <citation type="journal article" date="2003" name="Biochem. J.">
        <title>Saccharomyces cerevisiae contains a Type II phosphoinositide 4-kinase.</title>
        <authorList>
            <person name="Shelton S.N."/>
            <person name="Barylko B."/>
            <person name="Binns D.D."/>
            <person name="Horazdovsky B.F."/>
            <person name="Albanesi J.P."/>
            <person name="Goodman J.M."/>
        </authorList>
    </citation>
    <scope>FUNCTION</scope>
    <scope>CATALYTIC ACTIVITY</scope>
    <scope>INTERACTION WITH LAS17</scope>
    <scope>SUBCELLULAR LOCATION</scope>
</reference>
<reference key="6">
    <citation type="journal article" date="2003" name="Nature">
        <title>Global analysis of protein expression in yeast.</title>
        <authorList>
            <person name="Ghaemmaghami S."/>
            <person name="Huh W.-K."/>
            <person name="Bower K."/>
            <person name="Howson R.W."/>
            <person name="Belle A."/>
            <person name="Dephoure N."/>
            <person name="O'Shea E.K."/>
            <person name="Weissman J.S."/>
        </authorList>
    </citation>
    <scope>LEVEL OF PROTEIN EXPRESSION [LARGE SCALE ANALYSIS]</scope>
</reference>
<protein>
    <recommendedName>
        <fullName>Phosphatidylinositol 4-kinase LSB6</fullName>
        <shortName>PI4-kinase</shortName>
        <shortName>PtdIns-4-kinase</shortName>
        <ecNumber>2.7.1.67</ecNumber>
    </recommendedName>
    <alternativeName>
        <fullName>LAS seventeen-binding protein 6</fullName>
        <shortName>LAS17-binding protein 6</shortName>
    </alternativeName>
</protein>
<feature type="chain" id="PRO_0000088850" description="Phosphatidylinositol 4-kinase LSB6">
    <location>
        <begin position="1"/>
        <end position="607"/>
    </location>
</feature>
<feature type="domain" description="PI3K/PI4K catalytic" evidence="1">
    <location>
        <begin position="161"/>
        <end position="522"/>
    </location>
</feature>
<feature type="region of interest" description="Disordered" evidence="2">
    <location>
        <begin position="73"/>
        <end position="93"/>
    </location>
</feature>
<feature type="region of interest" description="G-loop" evidence="1">
    <location>
        <begin position="167"/>
        <end position="173"/>
    </location>
</feature>
<feature type="region of interest" description="Disordered" evidence="2">
    <location>
        <begin position="318"/>
        <end position="356"/>
    </location>
</feature>
<feature type="region of interest" description="Catalytic loop" evidence="1">
    <location>
        <begin position="384"/>
        <end position="392"/>
    </location>
</feature>
<feature type="region of interest" description="Activation loop" evidence="1">
    <location>
        <begin position="411"/>
        <end position="431"/>
    </location>
</feature>
<feature type="compositionally biased region" description="Polar residues" evidence="2">
    <location>
        <begin position="73"/>
        <end position="88"/>
    </location>
</feature>
<feature type="compositionally biased region" description="Basic and acidic residues" evidence="2">
    <location>
        <begin position="319"/>
        <end position="330"/>
    </location>
</feature>
<feature type="compositionally biased region" description="Polar residues" evidence="2">
    <location>
        <begin position="341"/>
        <end position="351"/>
    </location>
</feature>
<evidence type="ECO:0000255" key="1">
    <source>
        <dbReference type="PROSITE-ProRule" id="PRU00269"/>
    </source>
</evidence>
<evidence type="ECO:0000256" key="2">
    <source>
        <dbReference type="SAM" id="MobiDB-lite"/>
    </source>
</evidence>
<evidence type="ECO:0000269" key="3">
    <source>
    </source>
</evidence>
<evidence type="ECO:0000269" key="4">
    <source>
    </source>
</evidence>
<evidence type="ECO:0000269" key="5">
    <source>
    </source>
</evidence>
<evidence type="ECO:0000305" key="6"/>
<organism>
    <name type="scientific">Saccharomyces cerevisiae (strain ATCC 204508 / S288c)</name>
    <name type="common">Baker's yeast</name>
    <dbReference type="NCBI Taxonomy" id="559292"/>
    <lineage>
        <taxon>Eukaryota</taxon>
        <taxon>Fungi</taxon>
        <taxon>Dikarya</taxon>
        <taxon>Ascomycota</taxon>
        <taxon>Saccharomycotina</taxon>
        <taxon>Saccharomycetes</taxon>
        <taxon>Saccharomycetales</taxon>
        <taxon>Saccharomycetaceae</taxon>
        <taxon>Saccharomyces</taxon>
    </lineage>
</organism>